<organism>
    <name type="scientific">Shewanella sediminis (strain HAW-EB3)</name>
    <dbReference type="NCBI Taxonomy" id="425104"/>
    <lineage>
        <taxon>Bacteria</taxon>
        <taxon>Pseudomonadati</taxon>
        <taxon>Pseudomonadota</taxon>
        <taxon>Gammaproteobacteria</taxon>
        <taxon>Alteromonadales</taxon>
        <taxon>Shewanellaceae</taxon>
        <taxon>Shewanella</taxon>
    </lineage>
</organism>
<sequence length="99" mass="10876">MISQERLLKVILAPHISEKSTVCAENDNTVVFRVAIDATKAEVKAAVAQLFEVEVDSVRTLVNKGKTKRTGARMGRRVDWKKAYVTLADGAEIDFVGAE</sequence>
<reference key="1">
    <citation type="submission" date="2007-08" db="EMBL/GenBank/DDBJ databases">
        <title>Complete sequence of Shewanella sediminis HAW-EB3.</title>
        <authorList>
            <consortium name="US DOE Joint Genome Institute"/>
            <person name="Copeland A."/>
            <person name="Lucas S."/>
            <person name="Lapidus A."/>
            <person name="Barry K."/>
            <person name="Glavina del Rio T."/>
            <person name="Dalin E."/>
            <person name="Tice H."/>
            <person name="Pitluck S."/>
            <person name="Chertkov O."/>
            <person name="Brettin T."/>
            <person name="Bruce D."/>
            <person name="Detter J.C."/>
            <person name="Han C."/>
            <person name="Schmutz J."/>
            <person name="Larimer F."/>
            <person name="Land M."/>
            <person name="Hauser L."/>
            <person name="Kyrpides N."/>
            <person name="Kim E."/>
            <person name="Zhao J.-S."/>
            <person name="Richardson P."/>
        </authorList>
    </citation>
    <scope>NUCLEOTIDE SEQUENCE [LARGE SCALE GENOMIC DNA]</scope>
    <source>
        <strain>HAW-EB3</strain>
    </source>
</reference>
<comment type="function">
    <text evidence="1">One of the early assembly proteins it binds 23S rRNA. One of the proteins that surrounds the polypeptide exit tunnel on the outside of the ribosome. Forms the main docking site for trigger factor binding to the ribosome.</text>
</comment>
<comment type="subunit">
    <text evidence="1">Part of the 50S ribosomal subunit. Contacts protein L29, and trigger factor when it is bound to the ribosome.</text>
</comment>
<comment type="similarity">
    <text evidence="1">Belongs to the universal ribosomal protein uL23 family.</text>
</comment>
<evidence type="ECO:0000255" key="1">
    <source>
        <dbReference type="HAMAP-Rule" id="MF_01369"/>
    </source>
</evidence>
<evidence type="ECO:0000305" key="2"/>
<proteinExistence type="inferred from homology"/>
<dbReference type="EMBL" id="CP000821">
    <property type="protein sequence ID" value="ABV38919.1"/>
    <property type="molecule type" value="Genomic_DNA"/>
</dbReference>
<dbReference type="RefSeq" id="WP_012144647.1">
    <property type="nucleotide sequence ID" value="NC_009831.1"/>
</dbReference>
<dbReference type="SMR" id="A8G1E6"/>
<dbReference type="STRING" id="425104.Ssed_4315"/>
<dbReference type="KEGG" id="sse:Ssed_4315"/>
<dbReference type="eggNOG" id="COG0089">
    <property type="taxonomic scope" value="Bacteria"/>
</dbReference>
<dbReference type="HOGENOM" id="CLU_037562_3_1_6"/>
<dbReference type="OrthoDB" id="9793353at2"/>
<dbReference type="Proteomes" id="UP000002015">
    <property type="component" value="Chromosome"/>
</dbReference>
<dbReference type="GO" id="GO:1990904">
    <property type="term" value="C:ribonucleoprotein complex"/>
    <property type="evidence" value="ECO:0007669"/>
    <property type="project" value="UniProtKB-KW"/>
</dbReference>
<dbReference type="GO" id="GO:0005840">
    <property type="term" value="C:ribosome"/>
    <property type="evidence" value="ECO:0007669"/>
    <property type="project" value="UniProtKB-KW"/>
</dbReference>
<dbReference type="GO" id="GO:0019843">
    <property type="term" value="F:rRNA binding"/>
    <property type="evidence" value="ECO:0007669"/>
    <property type="project" value="UniProtKB-UniRule"/>
</dbReference>
<dbReference type="GO" id="GO:0003735">
    <property type="term" value="F:structural constituent of ribosome"/>
    <property type="evidence" value="ECO:0007669"/>
    <property type="project" value="InterPro"/>
</dbReference>
<dbReference type="GO" id="GO:0006412">
    <property type="term" value="P:translation"/>
    <property type="evidence" value="ECO:0007669"/>
    <property type="project" value="UniProtKB-UniRule"/>
</dbReference>
<dbReference type="FunFam" id="3.30.70.330:FF:000001">
    <property type="entry name" value="50S ribosomal protein L23"/>
    <property type="match status" value="1"/>
</dbReference>
<dbReference type="Gene3D" id="3.30.70.330">
    <property type="match status" value="1"/>
</dbReference>
<dbReference type="HAMAP" id="MF_01369_B">
    <property type="entry name" value="Ribosomal_uL23_B"/>
    <property type="match status" value="1"/>
</dbReference>
<dbReference type="InterPro" id="IPR012677">
    <property type="entry name" value="Nucleotide-bd_a/b_plait_sf"/>
</dbReference>
<dbReference type="InterPro" id="IPR013025">
    <property type="entry name" value="Ribosomal_uL23-like"/>
</dbReference>
<dbReference type="InterPro" id="IPR012678">
    <property type="entry name" value="Ribosomal_uL23/eL15/eS24_sf"/>
</dbReference>
<dbReference type="InterPro" id="IPR001014">
    <property type="entry name" value="Ribosomal_uL23_CS"/>
</dbReference>
<dbReference type="NCBIfam" id="NF004358">
    <property type="entry name" value="PRK05738.1-1"/>
    <property type="match status" value="1"/>
</dbReference>
<dbReference type="NCBIfam" id="NF004359">
    <property type="entry name" value="PRK05738.1-3"/>
    <property type="match status" value="1"/>
</dbReference>
<dbReference type="NCBIfam" id="NF004363">
    <property type="entry name" value="PRK05738.2-4"/>
    <property type="match status" value="1"/>
</dbReference>
<dbReference type="PANTHER" id="PTHR11620">
    <property type="entry name" value="60S RIBOSOMAL PROTEIN L23A"/>
    <property type="match status" value="1"/>
</dbReference>
<dbReference type="Pfam" id="PF00276">
    <property type="entry name" value="Ribosomal_L23"/>
    <property type="match status" value="1"/>
</dbReference>
<dbReference type="SUPFAM" id="SSF54189">
    <property type="entry name" value="Ribosomal proteins S24e, L23 and L15e"/>
    <property type="match status" value="1"/>
</dbReference>
<dbReference type="PROSITE" id="PS00050">
    <property type="entry name" value="RIBOSOMAL_L23"/>
    <property type="match status" value="1"/>
</dbReference>
<gene>
    <name evidence="1" type="primary">rplW</name>
    <name type="ordered locus">Ssed_4315</name>
</gene>
<name>RL23_SHESH</name>
<feature type="chain" id="PRO_1000087231" description="Large ribosomal subunit protein uL23">
    <location>
        <begin position="1"/>
        <end position="99"/>
    </location>
</feature>
<protein>
    <recommendedName>
        <fullName evidence="1">Large ribosomal subunit protein uL23</fullName>
    </recommendedName>
    <alternativeName>
        <fullName evidence="2">50S ribosomal protein L23</fullName>
    </alternativeName>
</protein>
<keyword id="KW-1185">Reference proteome</keyword>
<keyword id="KW-0687">Ribonucleoprotein</keyword>
<keyword id="KW-0689">Ribosomal protein</keyword>
<keyword id="KW-0694">RNA-binding</keyword>
<keyword id="KW-0699">rRNA-binding</keyword>
<accession>A8G1E6</accession>